<sequence length="448" mass="51171">MGKFLQLLSHPTELKAVIQLFGFRQPLHPGKRDVNDKELGRCYELLNLTSRSFAAVIEELHPELRDAVMIFYLVLRALDTIEDDMTIKSSIKIPLLREFDTKLNTKNWTFDGYGPNEKDRTVLVEFDKILNVYHRLKPQYQDIIKSITFKMGNGMADYILDEEFNVYGVATVEDYNLYCHYVAGLVGEGLTNLFVLANFGDKTLTENNFAKADSMGLFLQKTNIIRDYHEDLQDGRSFWPREIWSKYTENLQDFHKVKTPAKEFAGVSCINELVLNALGHVTDCLDYLSLVKDPSSFSFCAIPQVMAVATLAEVYNNPKVLHGVVKIRKGTTCRLILESRTLPGVVKIFKEYIQVINHKSSVRDPNYLKIGIKCGEIEQYCEMIYPNKQALPPSMKSLPENKFTKIVASRESIDLSVQRRIEPGNFNCNVVLFGIGALILSLIYFVLY</sequence>
<organism>
    <name type="scientific">Candida albicans</name>
    <name type="common">Yeast</name>
    <dbReference type="NCBI Taxonomy" id="5476"/>
    <lineage>
        <taxon>Eukaryota</taxon>
        <taxon>Fungi</taxon>
        <taxon>Dikarya</taxon>
        <taxon>Ascomycota</taxon>
        <taxon>Saccharomycotina</taxon>
        <taxon>Pichiomycetes</taxon>
        <taxon>Debaryomycetaceae</taxon>
        <taxon>Candida/Lodderomyces clade</taxon>
        <taxon>Candida</taxon>
    </lineage>
</organism>
<feature type="chain" id="PRO_0000067447" description="Squalene synthase ERG9">
    <location>
        <begin position="1"/>
        <end position="448"/>
    </location>
</feature>
<feature type="transmembrane region" description="Helical" evidence="3">
    <location>
        <begin position="420"/>
        <end position="440"/>
    </location>
</feature>
<reference key="1">
    <citation type="submission" date="1996-12" db="EMBL/GenBank/DDBJ databases">
        <title>Cloning of Candida albicans squalene synthase gene.</title>
        <authorList>
            <person name="Ishii N."/>
            <person name="Arisawa M."/>
            <person name="Aoki Y."/>
        </authorList>
    </citation>
    <scope>NUCLEOTIDE SEQUENCE [GENOMIC DNA]</scope>
    <source>
        <strain>ATCC 10259 / CBS 5796 / DSM 5817 / JCM 2078 / NBRC 1060 / 2024</strain>
    </source>
</reference>
<reference key="2">
    <citation type="journal article" date="2003" name="Med. Mycol.">
        <title>Antifungal activity of fluconazole in combination with lovastatin and their effects on gene expression in the ergosterol and prenylation pathways in Candida albicans.</title>
        <authorList>
            <person name="Song J.L."/>
            <person name="Lyons C.N."/>
            <person name="Holleman S."/>
            <person name="Oliver B.G."/>
            <person name="White T.C."/>
        </authorList>
    </citation>
    <scope>INDUCTION</scope>
</reference>
<reference key="3">
    <citation type="journal article" date="2012" name="Cell">
        <title>A recently evolved transcriptional network controls biofilm development in Candida albicans.</title>
        <authorList>
            <person name="Nobile C.J."/>
            <person name="Fox E.P."/>
            <person name="Nett J.E."/>
            <person name="Sorrells T.R."/>
            <person name="Mitrovich Q.M."/>
            <person name="Hernday A.D."/>
            <person name="Tuch B.B."/>
            <person name="Andes D.R."/>
            <person name="Johnson A.D."/>
        </authorList>
    </citation>
    <scope>INDUCTION</scope>
</reference>
<protein>
    <recommendedName>
        <fullName evidence="6">Squalene synthase ERG9</fullName>
        <shortName evidence="7">SQS</shortName>
        <shortName evidence="7">SS</shortName>
        <ecNumber evidence="2">2.5.1.21</ecNumber>
    </recommendedName>
    <alternativeName>
        <fullName evidence="6">Ergosterol biosynthesis protein 9</fullName>
    </alternativeName>
    <alternativeName>
        <fullName evidence="7">FPP:FPP farnesyltransferase ERG9</fullName>
    </alternativeName>
    <alternativeName>
        <fullName evidence="7">Farnesyl-diphosphate farnesyltransferase ERG9</fullName>
    </alternativeName>
</protein>
<name>ERG9_CANAX</name>
<keyword id="KW-0256">Endoplasmic reticulum</keyword>
<keyword id="KW-0414">Isoprene biosynthesis</keyword>
<keyword id="KW-0444">Lipid biosynthesis</keyword>
<keyword id="KW-0443">Lipid metabolism</keyword>
<keyword id="KW-0460">Magnesium</keyword>
<keyword id="KW-0472">Membrane</keyword>
<keyword id="KW-0492">Microsome</keyword>
<keyword id="KW-0511">Multifunctional enzyme</keyword>
<keyword id="KW-0521">NADP</keyword>
<keyword id="KW-0752">Steroid biosynthesis</keyword>
<keyword id="KW-0753">Steroid metabolism</keyword>
<keyword id="KW-0756">Sterol biosynthesis</keyword>
<keyword id="KW-1207">Sterol metabolism</keyword>
<keyword id="KW-0808">Transferase</keyword>
<keyword id="KW-0812">Transmembrane</keyword>
<keyword id="KW-1133">Transmembrane helix</keyword>
<evidence type="ECO:0000250" key="1">
    <source>
        <dbReference type="UniProtKB" id="P25340"/>
    </source>
</evidence>
<evidence type="ECO:0000250" key="2">
    <source>
        <dbReference type="UniProtKB" id="P29704"/>
    </source>
</evidence>
<evidence type="ECO:0000255" key="3"/>
<evidence type="ECO:0000269" key="4">
    <source>
    </source>
</evidence>
<evidence type="ECO:0000269" key="5">
    <source>
    </source>
</evidence>
<evidence type="ECO:0000303" key="6">
    <source>
    </source>
</evidence>
<evidence type="ECO:0000305" key="7"/>
<gene>
    <name evidence="6" type="primary">ERG9</name>
</gene>
<accession>P78589</accession>
<dbReference type="EC" id="2.5.1.21" evidence="2"/>
<dbReference type="EMBL" id="D89610">
    <property type="protein sequence ID" value="BAA13995.1"/>
    <property type="molecule type" value="Genomic_DNA"/>
</dbReference>
<dbReference type="SMR" id="P78589"/>
<dbReference type="VEuPathDB" id="FungiDB:C2_08610W_A"/>
<dbReference type="VEuPathDB" id="FungiDB:CAWG_05945"/>
<dbReference type="UniPathway" id="UPA00767">
    <property type="reaction ID" value="UER00751"/>
</dbReference>
<dbReference type="GO" id="GO:0005789">
    <property type="term" value="C:endoplasmic reticulum membrane"/>
    <property type="evidence" value="ECO:0007669"/>
    <property type="project" value="UniProtKB-SubCell"/>
</dbReference>
<dbReference type="GO" id="GO:0051996">
    <property type="term" value="F:squalene synthase [NAD(P)H] activity"/>
    <property type="evidence" value="ECO:0007669"/>
    <property type="project" value="UniProtKB-EC"/>
</dbReference>
<dbReference type="GO" id="GO:0006696">
    <property type="term" value="P:ergosterol biosynthetic process"/>
    <property type="evidence" value="ECO:0007669"/>
    <property type="project" value="EnsemblFungi"/>
</dbReference>
<dbReference type="GO" id="GO:0045338">
    <property type="term" value="P:farnesyl diphosphate metabolic process"/>
    <property type="evidence" value="ECO:0007669"/>
    <property type="project" value="InterPro"/>
</dbReference>
<dbReference type="GO" id="GO:1902767">
    <property type="term" value="P:isoprenoid biosynthetic process via mevalonate"/>
    <property type="evidence" value="ECO:0007669"/>
    <property type="project" value="EnsemblFungi"/>
</dbReference>
<dbReference type="CDD" id="cd00683">
    <property type="entry name" value="Trans_IPPS_HH"/>
    <property type="match status" value="1"/>
</dbReference>
<dbReference type="FunFam" id="1.10.600.10:FF:000003">
    <property type="entry name" value="Farnesyl-diphosphate farnesyltransferase 1"/>
    <property type="match status" value="1"/>
</dbReference>
<dbReference type="Gene3D" id="1.10.600.10">
    <property type="entry name" value="Farnesyl Diphosphate Synthase"/>
    <property type="match status" value="1"/>
</dbReference>
<dbReference type="InterPro" id="IPR008949">
    <property type="entry name" value="Isoprenoid_synthase_dom_sf"/>
</dbReference>
<dbReference type="InterPro" id="IPR002060">
    <property type="entry name" value="Squ/phyt_synthse"/>
</dbReference>
<dbReference type="InterPro" id="IPR006449">
    <property type="entry name" value="Squal_synth-like"/>
</dbReference>
<dbReference type="InterPro" id="IPR019845">
    <property type="entry name" value="Squalene/phytoene_synthase_CS"/>
</dbReference>
<dbReference type="InterPro" id="IPR044844">
    <property type="entry name" value="Trans_IPPS_euk-type"/>
</dbReference>
<dbReference type="InterPro" id="IPR033904">
    <property type="entry name" value="Trans_IPPS_HH"/>
</dbReference>
<dbReference type="NCBIfam" id="TIGR01559">
    <property type="entry name" value="squal_synth"/>
    <property type="match status" value="1"/>
</dbReference>
<dbReference type="PANTHER" id="PTHR11626">
    <property type="entry name" value="FARNESYL-DIPHOSPHATE FARNESYLTRANSFERASE"/>
    <property type="match status" value="1"/>
</dbReference>
<dbReference type="PANTHER" id="PTHR11626:SF2">
    <property type="entry name" value="SQUALENE SYNTHASE"/>
    <property type="match status" value="1"/>
</dbReference>
<dbReference type="Pfam" id="PF00494">
    <property type="entry name" value="SQS_PSY"/>
    <property type="match status" value="1"/>
</dbReference>
<dbReference type="SFLD" id="SFLDS00005">
    <property type="entry name" value="Isoprenoid_Synthase_Type_I"/>
    <property type="match status" value="1"/>
</dbReference>
<dbReference type="SFLD" id="SFLDG01018">
    <property type="entry name" value="Squalene/Phytoene_Synthase_Lik"/>
    <property type="match status" value="1"/>
</dbReference>
<dbReference type="SUPFAM" id="SSF48576">
    <property type="entry name" value="Terpenoid synthases"/>
    <property type="match status" value="1"/>
</dbReference>
<dbReference type="PROSITE" id="PS01044">
    <property type="entry name" value="SQUALEN_PHYTOEN_SYN_1"/>
    <property type="match status" value="1"/>
</dbReference>
<dbReference type="PROSITE" id="PS01045">
    <property type="entry name" value="SQUALEN_PHYTOEN_SYN_2"/>
    <property type="match status" value="1"/>
</dbReference>
<comment type="function">
    <text evidence="2 7">Squalene synthase; part of the third module of ergosterol biosynthesis pathway that includes the late steps of the pathway (By similarity). ERG9 produces squalene from 2 farnesyl pyrophosphate moieties (By similarity). The third module or late pathway involves the ergosterol synthesis itself through consecutive reactions that mainly occur in the endoplasmic reticulum (ER) membrane. Firstly, the squalene synthase ERG9 catalyzes the condensation of 2 farnesyl pyrophosphate moieties to form squalene, which is the precursor of all steroids. Squalene synthase is crucial for balancing the incorporation of farnesyl diphosphate (FPP) into sterol and nonsterol isoprene synthesis. Secondly, the squalene epoxidase ERG1 catalyzes the stereospecific oxidation of squalene to (S)-2,3-epoxysqualene, which is considered to be a rate-limiting enzyme in steroid biosynthesis. Then, the lanosterol synthase ERG7 catalyzes the cyclization of (S)-2,3 oxidosqualene to lanosterol, a reaction that forms the sterol core. In the next steps, lanosterol is transformed to zymosterol through a complex process involving various demethylation, reduction and desaturation reactions. The lanosterol 14-alpha-demethylase ERG11 (also known as CYP51) catalyzes C14-demethylation of lanosterol to produce 4,4'-dimethyl cholesta-8,14,24-triene-3-beta-ol, which is critical for ergosterol biosynthesis. The C-14 reductase ERG24 reduces the C14=C15 double bond of 4,4-dimethyl-cholesta-8,14,24-trienol to produce 4,4-dimethyl-cholesta-8,24-dienol. 4,4-dimethyl-cholesta-8,24-dienol is substrate of the C-4 demethylation complex ERG25-ERG26-ERG27 in which ERG25 catalyzes the three-step monooxygenation required for the demethylation of 4,4-dimethyl and 4alpha-methylsterols, ERG26 catalyzes the oxidative decarboxylation that results in a reduction of the 3-beta-hydroxy group at the C-3 carbon to an oxo group, and ERG27 is responsible for the reduction of the keto group on the C-3. ERG28 has a role as a scaffold to help anchor ERG25, ERG26 and ERG27 to the endoplasmic reticulum and ERG29 regulates the activity of the iron-containing C4-methylsterol oxidase ERG25. Then, the sterol 24-C-methyltransferase ERG6 catalyzes the methyl transfer from S-adenosyl-methionine to the C-24 of zymosterol to form fecosterol. The C-8 sterol isomerase ERG2 catalyzes the reaction which results in unsaturation at C-7 in the B ring of sterols and thus converts fecosterol to episterol. The sterol-C5-desaturase ERG3 then catalyzes the introduction of a C-5 double bond in the B ring to produce 5-dehydroepisterol. The C-22 sterol desaturase ERG5 further converts 5-dehydroepisterol into ergosta-5,7,22,24(28)-tetraen-3beta-ol by forming the C-22(23) double bond in the sterol side chain. Finally, ergosta-5,7,22,24(28)-tetraen-3beta-ol is substrate of the C-24(28) sterol reductase ERG4 to produce ergosterol (Probable).</text>
</comment>
<comment type="catalytic activity">
    <reaction evidence="1">
        <text>2 (2E,6E)-farnesyl diphosphate + NADPH + H(+) = squalene + 2 diphosphate + NADP(+)</text>
        <dbReference type="Rhea" id="RHEA:32295"/>
        <dbReference type="ChEBI" id="CHEBI:15378"/>
        <dbReference type="ChEBI" id="CHEBI:15440"/>
        <dbReference type="ChEBI" id="CHEBI:33019"/>
        <dbReference type="ChEBI" id="CHEBI:57783"/>
        <dbReference type="ChEBI" id="CHEBI:58349"/>
        <dbReference type="ChEBI" id="CHEBI:175763"/>
        <dbReference type="EC" id="2.5.1.21"/>
    </reaction>
    <physiologicalReaction direction="left-to-right" evidence="1">
        <dbReference type="Rhea" id="RHEA:32296"/>
    </physiologicalReaction>
</comment>
<comment type="catalytic activity">
    <reaction evidence="1">
        <text>2 (2E,6E)-farnesyl diphosphate + NADH + H(+) = squalene + 2 diphosphate + NAD(+)</text>
        <dbReference type="Rhea" id="RHEA:32299"/>
        <dbReference type="ChEBI" id="CHEBI:15378"/>
        <dbReference type="ChEBI" id="CHEBI:15440"/>
        <dbReference type="ChEBI" id="CHEBI:33019"/>
        <dbReference type="ChEBI" id="CHEBI:57540"/>
        <dbReference type="ChEBI" id="CHEBI:57945"/>
        <dbReference type="ChEBI" id="CHEBI:175763"/>
        <dbReference type="EC" id="2.5.1.21"/>
    </reaction>
    <physiologicalReaction direction="left-to-right" evidence="1">
        <dbReference type="Rhea" id="RHEA:32300"/>
    </physiologicalReaction>
</comment>
<comment type="cofactor">
    <cofactor evidence="1">
        <name>Mg(2+)</name>
        <dbReference type="ChEBI" id="CHEBI:18420"/>
    </cofactor>
</comment>
<comment type="pathway">
    <text evidence="1">Terpene metabolism; lanosterol biosynthesis; lanosterol from farnesyl diphosphate: step 1/3.</text>
</comment>
<comment type="subcellular location">
    <subcellularLocation>
        <location evidence="7">Endoplasmic reticulum membrane</location>
        <topology evidence="3">Single-pass membrane protein</topology>
    </subcellularLocation>
    <subcellularLocation>
        <location evidence="1">Microsome</location>
    </subcellularLocation>
</comment>
<comment type="induction">
    <text evidence="4 5">Expression is induced by lovastatin and fluconazole and is repressed by amphotericin B and caspofungin (PubMed:14653518). Expression is repressed during spider biofilm formation (PubMed:22265407).</text>
</comment>
<comment type="similarity">
    <text evidence="7">Belongs to the phytoene/squalene synthase family.</text>
</comment>
<proteinExistence type="evidence at transcript level"/>